<comment type="function">
    <text evidence="1">Component of the acetyl coenzyme A carboxylase (ACC) complex. Biotin carboxylase (BC) catalyzes the carboxylation of biotin on its carrier protein (BCCP) and then the CO(2) group is transferred by the transcarboxylase to acetyl-CoA to form malonyl-CoA.</text>
</comment>
<comment type="catalytic activity">
    <reaction evidence="1">
        <text>N(6)-carboxybiotinyl-L-lysyl-[protein] + acetyl-CoA = N(6)-biotinyl-L-lysyl-[protein] + malonyl-CoA</text>
        <dbReference type="Rhea" id="RHEA:54728"/>
        <dbReference type="Rhea" id="RHEA-COMP:10505"/>
        <dbReference type="Rhea" id="RHEA-COMP:10506"/>
        <dbReference type="ChEBI" id="CHEBI:57288"/>
        <dbReference type="ChEBI" id="CHEBI:57384"/>
        <dbReference type="ChEBI" id="CHEBI:83144"/>
        <dbReference type="ChEBI" id="CHEBI:83145"/>
        <dbReference type="EC" id="2.1.3.15"/>
    </reaction>
</comment>
<comment type="cofactor">
    <cofactor evidence="1">
        <name>Zn(2+)</name>
        <dbReference type="ChEBI" id="CHEBI:29105"/>
    </cofactor>
    <text evidence="1">Binds 1 zinc ion per subunit.</text>
</comment>
<comment type="pathway">
    <text evidence="1">Lipid metabolism; malonyl-CoA biosynthesis; malonyl-CoA from acetyl-CoA: step 1/1.</text>
</comment>
<comment type="subunit">
    <text evidence="1">Acetyl-CoA carboxylase is a heterohexamer composed of biotin carboxyl carrier protein (AccB), biotin carboxylase (AccC) and two subunits each of ACCase subunit alpha (AccA) and ACCase subunit beta (AccD).</text>
</comment>
<comment type="subcellular location">
    <subcellularLocation>
        <location evidence="1">Cytoplasm</location>
    </subcellularLocation>
</comment>
<comment type="similarity">
    <text evidence="1">Belongs to the AccD/PCCB family.</text>
</comment>
<feature type="chain" id="PRO_0000359083" description="Acetyl-coenzyme A carboxylase carboxyl transferase subunit beta">
    <location>
        <begin position="1"/>
        <end position="326"/>
    </location>
</feature>
<feature type="domain" description="CoA carboxyltransferase N-terminal" evidence="2">
    <location>
        <begin position="29"/>
        <end position="298"/>
    </location>
</feature>
<feature type="zinc finger region" description="C4-type" evidence="1">
    <location>
        <begin position="33"/>
        <end position="55"/>
    </location>
</feature>
<feature type="region of interest" description="Disordered" evidence="3">
    <location>
        <begin position="302"/>
        <end position="326"/>
    </location>
</feature>
<feature type="compositionally biased region" description="Polar residues" evidence="3">
    <location>
        <begin position="309"/>
        <end position="326"/>
    </location>
</feature>
<feature type="binding site" evidence="1">
    <location>
        <position position="33"/>
    </location>
    <ligand>
        <name>Zn(2+)</name>
        <dbReference type="ChEBI" id="CHEBI:29105"/>
    </ligand>
</feature>
<feature type="binding site" evidence="1">
    <location>
        <position position="36"/>
    </location>
    <ligand>
        <name>Zn(2+)</name>
        <dbReference type="ChEBI" id="CHEBI:29105"/>
    </ligand>
</feature>
<feature type="binding site" evidence="1">
    <location>
        <position position="52"/>
    </location>
    <ligand>
        <name>Zn(2+)</name>
        <dbReference type="ChEBI" id="CHEBI:29105"/>
    </ligand>
</feature>
<feature type="binding site" evidence="1">
    <location>
        <position position="55"/>
    </location>
    <ligand>
        <name>Zn(2+)</name>
        <dbReference type="ChEBI" id="CHEBI:29105"/>
    </ligand>
</feature>
<evidence type="ECO:0000255" key="1">
    <source>
        <dbReference type="HAMAP-Rule" id="MF_01395"/>
    </source>
</evidence>
<evidence type="ECO:0000255" key="2">
    <source>
        <dbReference type="PROSITE-ProRule" id="PRU01136"/>
    </source>
</evidence>
<evidence type="ECO:0000256" key="3">
    <source>
        <dbReference type="SAM" id="MobiDB-lite"/>
    </source>
</evidence>
<proteinExistence type="inferred from homology"/>
<name>ACCD_TRIEI</name>
<protein>
    <recommendedName>
        <fullName evidence="1">Acetyl-coenzyme A carboxylase carboxyl transferase subunit beta</fullName>
        <shortName evidence="1">ACCase subunit beta</shortName>
        <shortName evidence="1">Acetyl-CoA carboxylase carboxyltransferase subunit beta</shortName>
        <ecNumber evidence="1">2.1.3.15</ecNumber>
    </recommendedName>
</protein>
<sequence length="326" mass="36383">MSLFDWFANRRKSSQDPQQRPEREIADGLWIKCEACGTLTYTKDLQANQMVCPECTHHIRVSSEQRIQQLIDFNTWVPIDPELRATDPLKFSDRKPYSDRLLEYQRKTGLPDAVQTGIGNIETEPVALGVMDFGFMGGSMGSVVGEKLTRLIEKATQESLPVIIICASGGARMQEGLLSLMQMAKISGALEQHREAKQLYIPILTHPTTGGVTASFAMLGDIIIAEPKATIGFAGRRVIEQTVREKLPENFQTSEYLLKHGFIDAIVPRTQLKKTLVKLIRLHKPHSLTLISDESLETGPHCHLPFQAESHNLSTTDNKIQPTPQG</sequence>
<reference key="1">
    <citation type="journal article" date="2015" name="Proc. Natl. Acad. Sci. U.S.A.">
        <title>Trichodesmium genome maintains abundant, widespread noncoding DNA in situ, despite oligotrophic lifestyle.</title>
        <authorList>
            <person name="Walworth N."/>
            <person name="Pfreundt U."/>
            <person name="Nelson W.C."/>
            <person name="Mincer T."/>
            <person name="Heidelberg J.F."/>
            <person name="Fu F."/>
            <person name="Waterbury J.B."/>
            <person name="Glavina del Rio T."/>
            <person name="Goodwin L."/>
            <person name="Kyrpides N.C."/>
            <person name="Land M.L."/>
            <person name="Woyke T."/>
            <person name="Hutchins D.A."/>
            <person name="Hess W.R."/>
            <person name="Webb E.A."/>
        </authorList>
    </citation>
    <scope>NUCLEOTIDE SEQUENCE [LARGE SCALE GENOMIC DNA]</scope>
    <source>
        <strain>IMS101</strain>
    </source>
</reference>
<gene>
    <name evidence="1" type="primary">accD</name>
    <name type="ordered locus">Tery_2684</name>
</gene>
<accession>Q111F1</accession>
<organism>
    <name type="scientific">Trichodesmium erythraeum (strain IMS101)</name>
    <dbReference type="NCBI Taxonomy" id="203124"/>
    <lineage>
        <taxon>Bacteria</taxon>
        <taxon>Bacillati</taxon>
        <taxon>Cyanobacteriota</taxon>
        <taxon>Cyanophyceae</taxon>
        <taxon>Oscillatoriophycideae</taxon>
        <taxon>Oscillatoriales</taxon>
        <taxon>Microcoleaceae</taxon>
        <taxon>Trichodesmium</taxon>
    </lineage>
</organism>
<keyword id="KW-0067">ATP-binding</keyword>
<keyword id="KW-0963">Cytoplasm</keyword>
<keyword id="KW-0275">Fatty acid biosynthesis</keyword>
<keyword id="KW-0276">Fatty acid metabolism</keyword>
<keyword id="KW-0444">Lipid biosynthesis</keyword>
<keyword id="KW-0443">Lipid metabolism</keyword>
<keyword id="KW-0479">Metal-binding</keyword>
<keyword id="KW-0547">Nucleotide-binding</keyword>
<keyword id="KW-0808">Transferase</keyword>
<keyword id="KW-0862">Zinc</keyword>
<keyword id="KW-0863">Zinc-finger</keyword>
<dbReference type="EC" id="2.1.3.15" evidence="1"/>
<dbReference type="EMBL" id="CP000393">
    <property type="protein sequence ID" value="ABG51873.1"/>
    <property type="molecule type" value="Genomic_DNA"/>
</dbReference>
<dbReference type="RefSeq" id="WP_011612235.1">
    <property type="nucleotide sequence ID" value="NC_008312.1"/>
</dbReference>
<dbReference type="SMR" id="Q111F1"/>
<dbReference type="STRING" id="203124.Tery_2684"/>
<dbReference type="KEGG" id="ter:Tery_2684"/>
<dbReference type="eggNOG" id="COG0777">
    <property type="taxonomic scope" value="Bacteria"/>
</dbReference>
<dbReference type="HOGENOM" id="CLU_015486_1_1_3"/>
<dbReference type="OrthoDB" id="9772975at2"/>
<dbReference type="UniPathway" id="UPA00655">
    <property type="reaction ID" value="UER00711"/>
</dbReference>
<dbReference type="GO" id="GO:0009317">
    <property type="term" value="C:acetyl-CoA carboxylase complex"/>
    <property type="evidence" value="ECO:0007669"/>
    <property type="project" value="InterPro"/>
</dbReference>
<dbReference type="GO" id="GO:0003989">
    <property type="term" value="F:acetyl-CoA carboxylase activity"/>
    <property type="evidence" value="ECO:0007669"/>
    <property type="project" value="InterPro"/>
</dbReference>
<dbReference type="GO" id="GO:0005524">
    <property type="term" value="F:ATP binding"/>
    <property type="evidence" value="ECO:0007669"/>
    <property type="project" value="UniProtKB-KW"/>
</dbReference>
<dbReference type="GO" id="GO:0016743">
    <property type="term" value="F:carboxyl- or carbamoyltransferase activity"/>
    <property type="evidence" value="ECO:0007669"/>
    <property type="project" value="UniProtKB-UniRule"/>
</dbReference>
<dbReference type="GO" id="GO:0008270">
    <property type="term" value="F:zinc ion binding"/>
    <property type="evidence" value="ECO:0007669"/>
    <property type="project" value="UniProtKB-UniRule"/>
</dbReference>
<dbReference type="GO" id="GO:0006633">
    <property type="term" value="P:fatty acid biosynthetic process"/>
    <property type="evidence" value="ECO:0007669"/>
    <property type="project" value="UniProtKB-KW"/>
</dbReference>
<dbReference type="GO" id="GO:2001295">
    <property type="term" value="P:malonyl-CoA biosynthetic process"/>
    <property type="evidence" value="ECO:0007669"/>
    <property type="project" value="UniProtKB-UniRule"/>
</dbReference>
<dbReference type="Gene3D" id="3.90.226.10">
    <property type="entry name" value="2-enoyl-CoA Hydratase, Chain A, domain 1"/>
    <property type="match status" value="1"/>
</dbReference>
<dbReference type="HAMAP" id="MF_01395">
    <property type="entry name" value="AcetylCoA_CT_beta"/>
    <property type="match status" value="1"/>
</dbReference>
<dbReference type="InterPro" id="IPR034733">
    <property type="entry name" value="AcCoA_carboxyl_beta"/>
</dbReference>
<dbReference type="InterPro" id="IPR000438">
    <property type="entry name" value="Acetyl_CoA_COase_Trfase_b_su"/>
</dbReference>
<dbReference type="InterPro" id="IPR029045">
    <property type="entry name" value="ClpP/crotonase-like_dom_sf"/>
</dbReference>
<dbReference type="InterPro" id="IPR011762">
    <property type="entry name" value="COA_CT_N"/>
</dbReference>
<dbReference type="InterPro" id="IPR041010">
    <property type="entry name" value="Znf-ACC"/>
</dbReference>
<dbReference type="NCBIfam" id="TIGR00515">
    <property type="entry name" value="accD"/>
    <property type="match status" value="1"/>
</dbReference>
<dbReference type="PANTHER" id="PTHR42995">
    <property type="entry name" value="ACETYL-COENZYME A CARBOXYLASE CARBOXYL TRANSFERASE SUBUNIT BETA, CHLOROPLASTIC"/>
    <property type="match status" value="1"/>
</dbReference>
<dbReference type="PANTHER" id="PTHR42995:SF5">
    <property type="entry name" value="ACETYL-COENZYME A CARBOXYLASE CARBOXYL TRANSFERASE SUBUNIT BETA, CHLOROPLASTIC"/>
    <property type="match status" value="1"/>
</dbReference>
<dbReference type="Pfam" id="PF01039">
    <property type="entry name" value="Carboxyl_trans"/>
    <property type="match status" value="1"/>
</dbReference>
<dbReference type="Pfam" id="PF17848">
    <property type="entry name" value="Zn_ribbon_ACC"/>
    <property type="match status" value="1"/>
</dbReference>
<dbReference type="PRINTS" id="PR01070">
    <property type="entry name" value="ACCCTRFRASEB"/>
</dbReference>
<dbReference type="SUPFAM" id="SSF52096">
    <property type="entry name" value="ClpP/crotonase"/>
    <property type="match status" value="1"/>
</dbReference>
<dbReference type="PROSITE" id="PS50980">
    <property type="entry name" value="COA_CT_NTER"/>
    <property type="match status" value="1"/>
</dbReference>